<gene>
    <name type="ordered locus">VCM66_0196</name>
</gene>
<protein>
    <recommendedName>
        <fullName evidence="1">UPF0114 protein VCM66_0196</fullName>
    </recommendedName>
</protein>
<organism>
    <name type="scientific">Vibrio cholerae serotype O1 (strain M66-2)</name>
    <dbReference type="NCBI Taxonomy" id="579112"/>
    <lineage>
        <taxon>Bacteria</taxon>
        <taxon>Pseudomonadati</taxon>
        <taxon>Pseudomonadota</taxon>
        <taxon>Gammaproteobacteria</taxon>
        <taxon>Vibrionales</taxon>
        <taxon>Vibrionaceae</taxon>
        <taxon>Vibrio</taxon>
    </lineage>
</organism>
<reference key="1">
    <citation type="journal article" date="2008" name="PLoS ONE">
        <title>A recalibrated molecular clock and independent origins for the cholera pandemic clones.</title>
        <authorList>
            <person name="Feng L."/>
            <person name="Reeves P.R."/>
            <person name="Lan R."/>
            <person name="Ren Y."/>
            <person name="Gao C."/>
            <person name="Zhou Z."/>
            <person name="Ren Y."/>
            <person name="Cheng J."/>
            <person name="Wang W."/>
            <person name="Wang J."/>
            <person name="Qian W."/>
            <person name="Li D."/>
            <person name="Wang L."/>
        </authorList>
    </citation>
    <scope>NUCLEOTIDE SEQUENCE [LARGE SCALE GENOMIC DNA]</scope>
    <source>
        <strain>M66-2</strain>
    </source>
</reference>
<accession>C3LQH1</accession>
<sequence length="162" mass="18345">MERLIEKLLYSSRWIMAPIYLGLSLLLLALGIKFFQEIFHLLPNIFTIKEVDLILVALSLIDVSLVGGLIVMVMFSGYENFVSKLDVDESEDKLGWLGKLDTSSLKNKVSASIVAISSIHLLKVFMNTENIESDKIKWYLLLHITFVVSAFAMGYLDKITKK</sequence>
<feature type="chain" id="PRO_1000197579" description="UPF0114 protein VCM66_0196">
    <location>
        <begin position="1"/>
        <end position="162"/>
    </location>
</feature>
<feature type="transmembrane region" description="Helical" evidence="1">
    <location>
        <begin position="15"/>
        <end position="35"/>
    </location>
</feature>
<feature type="transmembrane region" description="Helical" evidence="1">
    <location>
        <begin position="53"/>
        <end position="73"/>
    </location>
</feature>
<feature type="transmembrane region" description="Helical" evidence="1">
    <location>
        <begin position="109"/>
        <end position="126"/>
    </location>
</feature>
<feature type="transmembrane region" description="Helical" evidence="1">
    <location>
        <begin position="136"/>
        <end position="156"/>
    </location>
</feature>
<comment type="subcellular location">
    <subcellularLocation>
        <location evidence="1">Cell membrane</location>
        <topology evidence="1">Multi-pass membrane protein</topology>
    </subcellularLocation>
</comment>
<comment type="similarity">
    <text evidence="1">Belongs to the UPF0114 family.</text>
</comment>
<dbReference type="EMBL" id="CP001233">
    <property type="protein sequence ID" value="ACP04529.1"/>
    <property type="molecule type" value="Genomic_DNA"/>
</dbReference>
<dbReference type="RefSeq" id="WP_000440285.1">
    <property type="nucleotide sequence ID" value="NC_012578.1"/>
</dbReference>
<dbReference type="KEGG" id="vcm:VCM66_0196"/>
<dbReference type="HOGENOM" id="CLU_097887_1_1_6"/>
<dbReference type="Proteomes" id="UP000001217">
    <property type="component" value="Chromosome I"/>
</dbReference>
<dbReference type="GO" id="GO:0005886">
    <property type="term" value="C:plasma membrane"/>
    <property type="evidence" value="ECO:0007669"/>
    <property type="project" value="UniProtKB-SubCell"/>
</dbReference>
<dbReference type="HAMAP" id="MF_00143">
    <property type="entry name" value="UPF0114"/>
    <property type="match status" value="1"/>
</dbReference>
<dbReference type="InterPro" id="IPR005134">
    <property type="entry name" value="UPF0114"/>
</dbReference>
<dbReference type="InterPro" id="IPR020761">
    <property type="entry name" value="UPF0114_bac"/>
</dbReference>
<dbReference type="NCBIfam" id="TIGR00645">
    <property type="entry name" value="HI0507"/>
    <property type="match status" value="1"/>
</dbReference>
<dbReference type="PANTHER" id="PTHR38596">
    <property type="entry name" value="UPF0114 PROTEIN YQHA"/>
    <property type="match status" value="1"/>
</dbReference>
<dbReference type="PANTHER" id="PTHR38596:SF1">
    <property type="entry name" value="UPF0114 PROTEIN YQHA"/>
    <property type="match status" value="1"/>
</dbReference>
<dbReference type="Pfam" id="PF03350">
    <property type="entry name" value="UPF0114"/>
    <property type="match status" value="1"/>
</dbReference>
<keyword id="KW-1003">Cell membrane</keyword>
<keyword id="KW-0472">Membrane</keyword>
<keyword id="KW-0812">Transmembrane</keyword>
<keyword id="KW-1133">Transmembrane helix</keyword>
<evidence type="ECO:0000255" key="1">
    <source>
        <dbReference type="HAMAP-Rule" id="MF_00143"/>
    </source>
</evidence>
<proteinExistence type="inferred from homology"/>
<name>Y196_VIBCM</name>